<comment type="function">
    <text evidence="1">Functions in the biosynthesis of branched-chain amino acids. Catalyzes the dehydration of (2R,3R)-2,3-dihydroxy-3-methylpentanoate (2,3-dihydroxy-3-methylvalerate) into 2-oxo-3-methylpentanoate (2-oxo-3-methylvalerate) and of (2R)-2,3-dihydroxy-3-methylbutanoate (2,3-dihydroxyisovalerate) into 2-oxo-3-methylbutanoate (2-oxoisovalerate), the penultimate precursor to L-isoleucine and L-valine, respectively.</text>
</comment>
<comment type="catalytic activity">
    <reaction evidence="1">
        <text>(2R)-2,3-dihydroxy-3-methylbutanoate = 3-methyl-2-oxobutanoate + H2O</text>
        <dbReference type="Rhea" id="RHEA:24809"/>
        <dbReference type="ChEBI" id="CHEBI:11851"/>
        <dbReference type="ChEBI" id="CHEBI:15377"/>
        <dbReference type="ChEBI" id="CHEBI:49072"/>
        <dbReference type="EC" id="4.2.1.9"/>
    </reaction>
    <physiologicalReaction direction="left-to-right" evidence="1">
        <dbReference type="Rhea" id="RHEA:24810"/>
    </physiologicalReaction>
</comment>
<comment type="catalytic activity">
    <reaction evidence="1">
        <text>(2R,3R)-2,3-dihydroxy-3-methylpentanoate = (S)-3-methyl-2-oxopentanoate + H2O</text>
        <dbReference type="Rhea" id="RHEA:27694"/>
        <dbReference type="ChEBI" id="CHEBI:15377"/>
        <dbReference type="ChEBI" id="CHEBI:35146"/>
        <dbReference type="ChEBI" id="CHEBI:49258"/>
        <dbReference type="EC" id="4.2.1.9"/>
    </reaction>
    <physiologicalReaction direction="left-to-right" evidence="1">
        <dbReference type="Rhea" id="RHEA:27695"/>
    </physiologicalReaction>
</comment>
<comment type="cofactor">
    <cofactor evidence="1">
        <name>[2Fe-2S] cluster</name>
        <dbReference type="ChEBI" id="CHEBI:190135"/>
    </cofactor>
    <text evidence="1">Binds 1 [2Fe-2S] cluster per subunit. This cluster acts as a Lewis acid cofactor.</text>
</comment>
<comment type="cofactor">
    <cofactor evidence="1">
        <name>Mg(2+)</name>
        <dbReference type="ChEBI" id="CHEBI:18420"/>
    </cofactor>
</comment>
<comment type="pathway">
    <text evidence="1">Amino-acid biosynthesis; L-isoleucine biosynthesis; L-isoleucine from 2-oxobutanoate: step 3/4.</text>
</comment>
<comment type="pathway">
    <text evidence="1">Amino-acid biosynthesis; L-valine biosynthesis; L-valine from pyruvate: step 3/4.</text>
</comment>
<comment type="subunit">
    <text evidence="1">Homodimer.</text>
</comment>
<comment type="similarity">
    <text evidence="1">Belongs to the IlvD/Edd family.</text>
</comment>
<proteinExistence type="inferred from homology"/>
<reference key="1">
    <citation type="submission" date="2006-05" db="EMBL/GenBank/DDBJ databases">
        <authorList>
            <consortium name="Genoscope"/>
        </authorList>
    </citation>
    <scope>NUCLEOTIDE SEQUENCE [LARGE SCALE GENOMIC DNA]</scope>
    <source>
        <strain>RCC307</strain>
    </source>
</reference>
<keyword id="KW-0001">2Fe-2S</keyword>
<keyword id="KW-0028">Amino-acid biosynthesis</keyword>
<keyword id="KW-0100">Branched-chain amino acid biosynthesis</keyword>
<keyword id="KW-0408">Iron</keyword>
<keyword id="KW-0411">Iron-sulfur</keyword>
<keyword id="KW-0456">Lyase</keyword>
<keyword id="KW-0460">Magnesium</keyword>
<keyword id="KW-0479">Metal-binding</keyword>
<keyword id="KW-1185">Reference proteome</keyword>
<gene>
    <name evidence="1" type="primary">ilvD</name>
    <name type="ordered locus">SynRCC307_1248</name>
</gene>
<name>ILVD_SYNR3</name>
<dbReference type="EC" id="4.2.1.9" evidence="1"/>
<dbReference type="EMBL" id="CT978603">
    <property type="protein sequence ID" value="CAK28151.1"/>
    <property type="molecule type" value="Genomic_DNA"/>
</dbReference>
<dbReference type="SMR" id="A5GTE2"/>
<dbReference type="STRING" id="316278.SynRCC307_1248"/>
<dbReference type="KEGG" id="syr:SynRCC307_1248"/>
<dbReference type="eggNOG" id="COG0129">
    <property type="taxonomic scope" value="Bacteria"/>
</dbReference>
<dbReference type="HOGENOM" id="CLU_014271_4_1_3"/>
<dbReference type="OrthoDB" id="9807077at2"/>
<dbReference type="UniPathway" id="UPA00047">
    <property type="reaction ID" value="UER00057"/>
</dbReference>
<dbReference type="UniPathway" id="UPA00049">
    <property type="reaction ID" value="UER00061"/>
</dbReference>
<dbReference type="Proteomes" id="UP000001115">
    <property type="component" value="Chromosome"/>
</dbReference>
<dbReference type="GO" id="GO:0051537">
    <property type="term" value="F:2 iron, 2 sulfur cluster binding"/>
    <property type="evidence" value="ECO:0007669"/>
    <property type="project" value="UniProtKB-UniRule"/>
</dbReference>
<dbReference type="GO" id="GO:0004160">
    <property type="term" value="F:dihydroxy-acid dehydratase activity"/>
    <property type="evidence" value="ECO:0007669"/>
    <property type="project" value="UniProtKB-UniRule"/>
</dbReference>
<dbReference type="GO" id="GO:0000287">
    <property type="term" value="F:magnesium ion binding"/>
    <property type="evidence" value="ECO:0007669"/>
    <property type="project" value="UniProtKB-UniRule"/>
</dbReference>
<dbReference type="GO" id="GO:0009097">
    <property type="term" value="P:isoleucine biosynthetic process"/>
    <property type="evidence" value="ECO:0007669"/>
    <property type="project" value="UniProtKB-UniRule"/>
</dbReference>
<dbReference type="GO" id="GO:0009099">
    <property type="term" value="P:L-valine biosynthetic process"/>
    <property type="evidence" value="ECO:0007669"/>
    <property type="project" value="UniProtKB-UniRule"/>
</dbReference>
<dbReference type="FunFam" id="3.50.30.80:FF:000001">
    <property type="entry name" value="Dihydroxy-acid dehydratase"/>
    <property type="match status" value="1"/>
</dbReference>
<dbReference type="Gene3D" id="3.50.30.80">
    <property type="entry name" value="IlvD/EDD C-terminal domain-like"/>
    <property type="match status" value="1"/>
</dbReference>
<dbReference type="HAMAP" id="MF_00012">
    <property type="entry name" value="IlvD"/>
    <property type="match status" value="1"/>
</dbReference>
<dbReference type="InterPro" id="IPR050165">
    <property type="entry name" value="DHAD_IlvD/Edd"/>
</dbReference>
<dbReference type="InterPro" id="IPR042096">
    <property type="entry name" value="Dihydro-acid_dehy_C"/>
</dbReference>
<dbReference type="InterPro" id="IPR004404">
    <property type="entry name" value="DihydroxyA_deHydtase"/>
</dbReference>
<dbReference type="InterPro" id="IPR020558">
    <property type="entry name" value="DiOHA_6PGluconate_deHydtase_CS"/>
</dbReference>
<dbReference type="InterPro" id="IPR056740">
    <property type="entry name" value="ILV_EDD_C"/>
</dbReference>
<dbReference type="InterPro" id="IPR000581">
    <property type="entry name" value="ILV_EDD_N"/>
</dbReference>
<dbReference type="InterPro" id="IPR037237">
    <property type="entry name" value="IlvD/EDD_N"/>
</dbReference>
<dbReference type="NCBIfam" id="TIGR00110">
    <property type="entry name" value="ilvD"/>
    <property type="match status" value="1"/>
</dbReference>
<dbReference type="NCBIfam" id="NF002068">
    <property type="entry name" value="PRK00911.1"/>
    <property type="match status" value="1"/>
</dbReference>
<dbReference type="PANTHER" id="PTHR21000">
    <property type="entry name" value="DIHYDROXY-ACID DEHYDRATASE DAD"/>
    <property type="match status" value="1"/>
</dbReference>
<dbReference type="PANTHER" id="PTHR21000:SF5">
    <property type="entry name" value="DIHYDROXY-ACID DEHYDRATASE, MITOCHONDRIAL"/>
    <property type="match status" value="1"/>
</dbReference>
<dbReference type="Pfam" id="PF24877">
    <property type="entry name" value="ILV_EDD_C"/>
    <property type="match status" value="1"/>
</dbReference>
<dbReference type="Pfam" id="PF00920">
    <property type="entry name" value="ILVD_EDD_N"/>
    <property type="match status" value="1"/>
</dbReference>
<dbReference type="SUPFAM" id="SSF143975">
    <property type="entry name" value="IlvD/EDD N-terminal domain-like"/>
    <property type="match status" value="1"/>
</dbReference>
<dbReference type="SUPFAM" id="SSF52016">
    <property type="entry name" value="LeuD/IlvD-like"/>
    <property type="match status" value="1"/>
</dbReference>
<dbReference type="PROSITE" id="PS00886">
    <property type="entry name" value="ILVD_EDD_1"/>
    <property type="match status" value="1"/>
</dbReference>
<dbReference type="PROSITE" id="PS00887">
    <property type="entry name" value="ILVD_EDD_2"/>
    <property type="match status" value="1"/>
</dbReference>
<protein>
    <recommendedName>
        <fullName evidence="1">Dihydroxy-acid dehydratase</fullName>
        <shortName evidence="1">DAD</shortName>
        <ecNumber evidence="1">4.2.1.9</ecNumber>
    </recommendedName>
</protein>
<evidence type="ECO:0000255" key="1">
    <source>
        <dbReference type="HAMAP-Rule" id="MF_00012"/>
    </source>
</evidence>
<organism>
    <name type="scientific">Synechococcus sp. (strain RCC307)</name>
    <dbReference type="NCBI Taxonomy" id="316278"/>
    <lineage>
        <taxon>Bacteria</taxon>
        <taxon>Bacillati</taxon>
        <taxon>Cyanobacteriota</taxon>
        <taxon>Cyanophyceae</taxon>
        <taxon>Synechococcales</taxon>
        <taxon>Synechococcaceae</taxon>
        <taxon>Synechococcus</taxon>
    </lineage>
</organism>
<sequence>MAPLRSSAITQGVQRSPNRAMLRAVGFGDGDFSKPIIGIANGYSTITPCNVGLNDLALRAEAATQAAGGMPQLFGTITVSDGISMGTEGMKYSLVSREVIADAIETACNGQSMDGVLAIGGCDKNMPAAMLAMARMNIPGVFVYGGTIKPGKLGGCDLTVVSAFEAVGQLSSGKIDEAQLTAVEKNACPGAGSCGGMFTANTMSAAIETMGLSLPFSSTMAAEDPEKAESAARSAEVLVEAIAANIRPLDLLTREAFENAISVIMAVGGSTNAVLHLLAIARTAGVPLSIDDFETIRQRVPVICDLKPSGRFVTVDLHNAGGIPQVMKLLLDGGLLHGDCRTVEGKTLREVLADVPSEPPADQEVIRPLSNPLYAKGHLAVLKGNLASEGAVAKISGVKTPVLTGPARVFESEEQCLQAILANQVHAGDVVVVRNEGPVGGPGMREMLAPTAAIVGEGLGDKVALITDGRFSGGTYGLVVGHVAPEAAVGGMIGLVQEGDSITVDAQQQLLQLNVDAAELERRKQAWVKPEPRYRTGVLGKYARLVSSSSKGAVTDQP</sequence>
<accession>A5GTE2</accession>
<feature type="chain" id="PRO_0000321610" description="Dihydroxy-acid dehydratase">
    <location>
        <begin position="1"/>
        <end position="558"/>
    </location>
</feature>
<feature type="active site" description="Proton acceptor" evidence="1">
    <location>
        <position position="472"/>
    </location>
</feature>
<feature type="binding site" evidence="1">
    <location>
        <position position="49"/>
    </location>
    <ligand>
        <name>[2Fe-2S] cluster</name>
        <dbReference type="ChEBI" id="CHEBI:190135"/>
    </ligand>
</feature>
<feature type="binding site" evidence="1">
    <location>
        <position position="81"/>
    </location>
    <ligand>
        <name>Mg(2+)</name>
        <dbReference type="ChEBI" id="CHEBI:18420"/>
    </ligand>
</feature>
<feature type="binding site" evidence="1">
    <location>
        <position position="122"/>
    </location>
    <ligand>
        <name>[2Fe-2S] cluster</name>
        <dbReference type="ChEBI" id="CHEBI:190135"/>
    </ligand>
</feature>
<feature type="binding site" evidence="1">
    <location>
        <position position="123"/>
    </location>
    <ligand>
        <name>Mg(2+)</name>
        <dbReference type="ChEBI" id="CHEBI:18420"/>
    </ligand>
</feature>
<feature type="binding site" description="via carbamate group" evidence="1">
    <location>
        <position position="124"/>
    </location>
    <ligand>
        <name>Mg(2+)</name>
        <dbReference type="ChEBI" id="CHEBI:18420"/>
    </ligand>
</feature>
<feature type="binding site" evidence="1">
    <location>
        <position position="194"/>
    </location>
    <ligand>
        <name>[2Fe-2S] cluster</name>
        <dbReference type="ChEBI" id="CHEBI:190135"/>
    </ligand>
</feature>
<feature type="binding site" evidence="1">
    <location>
        <position position="446"/>
    </location>
    <ligand>
        <name>Mg(2+)</name>
        <dbReference type="ChEBI" id="CHEBI:18420"/>
    </ligand>
</feature>
<feature type="modified residue" description="N6-carboxylysine" evidence="1">
    <location>
        <position position="124"/>
    </location>
</feature>